<accession>B3QJT3</accession>
<protein>
    <recommendedName>
        <fullName evidence="1">Adenosylhomocysteinase</fullName>
        <ecNumber evidence="1">3.13.2.1</ecNumber>
    </recommendedName>
    <alternativeName>
        <fullName evidence="1">S-adenosyl-L-homocysteine hydrolase</fullName>
        <shortName evidence="1">AdoHcyase</shortName>
    </alternativeName>
</protein>
<name>SAHH_RHOPT</name>
<proteinExistence type="inferred from homology"/>
<organism>
    <name type="scientific">Rhodopseudomonas palustris (strain TIE-1)</name>
    <dbReference type="NCBI Taxonomy" id="395960"/>
    <lineage>
        <taxon>Bacteria</taxon>
        <taxon>Pseudomonadati</taxon>
        <taxon>Pseudomonadota</taxon>
        <taxon>Alphaproteobacteria</taxon>
        <taxon>Hyphomicrobiales</taxon>
        <taxon>Nitrobacteraceae</taxon>
        <taxon>Rhodopseudomonas</taxon>
    </lineage>
</organism>
<evidence type="ECO:0000255" key="1">
    <source>
        <dbReference type="HAMAP-Rule" id="MF_00563"/>
    </source>
</evidence>
<gene>
    <name evidence="1" type="primary">ahcY</name>
    <name type="ordered locus">Rpal_4545</name>
</gene>
<sequence>MTAKFTDYIVKDIGLAEFGRKEISLAETEMPGLMATREEYGPKQPLKGAKIAGSLHMTIQTAVLIETLVALGAEVRWVSCNIYSTQDHAAAAIAAAGIPVFAVKGETLKDYWDYTAKLFDWSDGGTPNMILDDGGDATMFVHQGLRAENGDTMFLDQHNSEEEEIFFALIKRILKEKPKGYFATLAKNIKGVSEETTTGVHRLYDMEKAGKLLFPAINVNDSVTKSKFDNLYGCRESLVDGIRRGTDVMLSGKVAMVAGFGDVGKGSAASLRQAGCRVMVSEVDPICALQAAMEGYQVVTMEDAAPIADIFVTATGNKDIITIEHMRAMKDRAIVCNIGHFDNEIQVATLKNMKWDNIKPQVDEITFPDGKRMILLSEGRLVNLGNAMGHPSFVMSASFTNQTLAQIELFQNQGKYEKKVYVLPKSLDEKVARLHLAKIGVKLTELRKDQADYIGVKVEGPFKADHYRY</sequence>
<dbReference type="EC" id="3.13.2.1" evidence="1"/>
<dbReference type="EMBL" id="CP001096">
    <property type="protein sequence ID" value="ACF03039.1"/>
    <property type="molecule type" value="Genomic_DNA"/>
</dbReference>
<dbReference type="RefSeq" id="WP_012497354.1">
    <property type="nucleotide sequence ID" value="NC_011004.1"/>
</dbReference>
<dbReference type="SMR" id="B3QJT3"/>
<dbReference type="KEGG" id="rpt:Rpal_4545"/>
<dbReference type="HOGENOM" id="CLU_025194_2_1_5"/>
<dbReference type="OrthoDB" id="9802717at2"/>
<dbReference type="UniPathway" id="UPA00314">
    <property type="reaction ID" value="UER00076"/>
</dbReference>
<dbReference type="Proteomes" id="UP000001725">
    <property type="component" value="Chromosome"/>
</dbReference>
<dbReference type="GO" id="GO:0005829">
    <property type="term" value="C:cytosol"/>
    <property type="evidence" value="ECO:0007669"/>
    <property type="project" value="TreeGrafter"/>
</dbReference>
<dbReference type="GO" id="GO:0004013">
    <property type="term" value="F:adenosylhomocysteinase activity"/>
    <property type="evidence" value="ECO:0007669"/>
    <property type="project" value="UniProtKB-UniRule"/>
</dbReference>
<dbReference type="GO" id="GO:0071269">
    <property type="term" value="P:L-homocysteine biosynthetic process"/>
    <property type="evidence" value="ECO:0007669"/>
    <property type="project" value="UniProtKB-UniRule"/>
</dbReference>
<dbReference type="GO" id="GO:0006730">
    <property type="term" value="P:one-carbon metabolic process"/>
    <property type="evidence" value="ECO:0007669"/>
    <property type="project" value="UniProtKB-KW"/>
</dbReference>
<dbReference type="GO" id="GO:0033353">
    <property type="term" value="P:S-adenosylmethionine cycle"/>
    <property type="evidence" value="ECO:0007669"/>
    <property type="project" value="TreeGrafter"/>
</dbReference>
<dbReference type="CDD" id="cd00401">
    <property type="entry name" value="SAHH"/>
    <property type="match status" value="1"/>
</dbReference>
<dbReference type="FunFam" id="3.40.50.720:FF:000004">
    <property type="entry name" value="Adenosylhomocysteinase"/>
    <property type="match status" value="1"/>
</dbReference>
<dbReference type="Gene3D" id="3.40.50.1480">
    <property type="entry name" value="Adenosylhomocysteinase-like"/>
    <property type="match status" value="1"/>
</dbReference>
<dbReference type="Gene3D" id="3.40.50.720">
    <property type="entry name" value="NAD(P)-binding Rossmann-like Domain"/>
    <property type="match status" value="1"/>
</dbReference>
<dbReference type="HAMAP" id="MF_00563">
    <property type="entry name" value="AdoHcyase"/>
    <property type="match status" value="1"/>
</dbReference>
<dbReference type="InterPro" id="IPR042172">
    <property type="entry name" value="Adenosylhomocyst_ase-like_sf"/>
</dbReference>
<dbReference type="InterPro" id="IPR000043">
    <property type="entry name" value="Adenosylhomocysteinase-like"/>
</dbReference>
<dbReference type="InterPro" id="IPR015878">
    <property type="entry name" value="Ado_hCys_hydrolase_NAD-bd"/>
</dbReference>
<dbReference type="InterPro" id="IPR036291">
    <property type="entry name" value="NAD(P)-bd_dom_sf"/>
</dbReference>
<dbReference type="InterPro" id="IPR020082">
    <property type="entry name" value="S-Ado-L-homoCys_hydrolase_CS"/>
</dbReference>
<dbReference type="NCBIfam" id="TIGR00936">
    <property type="entry name" value="ahcY"/>
    <property type="match status" value="1"/>
</dbReference>
<dbReference type="NCBIfam" id="NF004005">
    <property type="entry name" value="PRK05476.2-3"/>
    <property type="match status" value="1"/>
</dbReference>
<dbReference type="PANTHER" id="PTHR23420">
    <property type="entry name" value="ADENOSYLHOMOCYSTEINASE"/>
    <property type="match status" value="1"/>
</dbReference>
<dbReference type="PANTHER" id="PTHR23420:SF0">
    <property type="entry name" value="ADENOSYLHOMOCYSTEINASE"/>
    <property type="match status" value="1"/>
</dbReference>
<dbReference type="Pfam" id="PF05221">
    <property type="entry name" value="AdoHcyase"/>
    <property type="match status" value="1"/>
</dbReference>
<dbReference type="Pfam" id="PF00670">
    <property type="entry name" value="AdoHcyase_NAD"/>
    <property type="match status" value="1"/>
</dbReference>
<dbReference type="PIRSF" id="PIRSF001109">
    <property type="entry name" value="Ad_hcy_hydrolase"/>
    <property type="match status" value="1"/>
</dbReference>
<dbReference type="SMART" id="SM00996">
    <property type="entry name" value="AdoHcyase"/>
    <property type="match status" value="1"/>
</dbReference>
<dbReference type="SMART" id="SM00997">
    <property type="entry name" value="AdoHcyase_NAD"/>
    <property type="match status" value="1"/>
</dbReference>
<dbReference type="SUPFAM" id="SSF52283">
    <property type="entry name" value="Formate/glycerate dehydrogenase catalytic domain-like"/>
    <property type="match status" value="1"/>
</dbReference>
<dbReference type="SUPFAM" id="SSF51735">
    <property type="entry name" value="NAD(P)-binding Rossmann-fold domains"/>
    <property type="match status" value="1"/>
</dbReference>
<dbReference type="PROSITE" id="PS00738">
    <property type="entry name" value="ADOHCYASE_1"/>
    <property type="match status" value="1"/>
</dbReference>
<dbReference type="PROSITE" id="PS00739">
    <property type="entry name" value="ADOHCYASE_2"/>
    <property type="match status" value="1"/>
</dbReference>
<comment type="function">
    <text evidence="1">May play a key role in the regulation of the intracellular concentration of adenosylhomocysteine.</text>
</comment>
<comment type="catalytic activity">
    <reaction evidence="1">
        <text>S-adenosyl-L-homocysteine + H2O = L-homocysteine + adenosine</text>
        <dbReference type="Rhea" id="RHEA:21708"/>
        <dbReference type="ChEBI" id="CHEBI:15377"/>
        <dbReference type="ChEBI" id="CHEBI:16335"/>
        <dbReference type="ChEBI" id="CHEBI:57856"/>
        <dbReference type="ChEBI" id="CHEBI:58199"/>
        <dbReference type="EC" id="3.13.2.1"/>
    </reaction>
</comment>
<comment type="cofactor">
    <cofactor evidence="1">
        <name>NAD(+)</name>
        <dbReference type="ChEBI" id="CHEBI:57540"/>
    </cofactor>
    <text evidence="1">Binds 1 NAD(+) per subunit.</text>
</comment>
<comment type="pathway">
    <text evidence="1">Amino-acid biosynthesis; L-homocysteine biosynthesis; L-homocysteine from S-adenosyl-L-homocysteine: step 1/1.</text>
</comment>
<comment type="subcellular location">
    <subcellularLocation>
        <location evidence="1">Cytoplasm</location>
    </subcellularLocation>
</comment>
<comment type="similarity">
    <text evidence="1">Belongs to the adenosylhomocysteinase family.</text>
</comment>
<keyword id="KW-0963">Cytoplasm</keyword>
<keyword id="KW-0378">Hydrolase</keyword>
<keyword id="KW-0520">NAD</keyword>
<keyword id="KW-0554">One-carbon metabolism</keyword>
<feature type="chain" id="PRO_1000129301" description="Adenosylhomocysteinase">
    <location>
        <begin position="1"/>
        <end position="469"/>
    </location>
</feature>
<feature type="binding site" evidence="1">
    <location>
        <position position="58"/>
    </location>
    <ligand>
        <name>substrate</name>
    </ligand>
</feature>
<feature type="binding site" evidence="1">
    <location>
        <position position="133"/>
    </location>
    <ligand>
        <name>substrate</name>
    </ligand>
</feature>
<feature type="binding site" evidence="1">
    <location>
        <position position="195"/>
    </location>
    <ligand>
        <name>substrate</name>
    </ligand>
</feature>
<feature type="binding site" evidence="1">
    <location>
        <begin position="196"/>
        <end position="198"/>
    </location>
    <ligand>
        <name>NAD(+)</name>
        <dbReference type="ChEBI" id="CHEBI:57540"/>
    </ligand>
</feature>
<feature type="binding site" evidence="1">
    <location>
        <position position="225"/>
    </location>
    <ligand>
        <name>substrate</name>
    </ligand>
</feature>
<feature type="binding site" evidence="1">
    <location>
        <position position="229"/>
    </location>
    <ligand>
        <name>substrate</name>
    </ligand>
</feature>
<feature type="binding site" evidence="1">
    <location>
        <position position="230"/>
    </location>
    <ligand>
        <name>NAD(+)</name>
        <dbReference type="ChEBI" id="CHEBI:57540"/>
    </ligand>
</feature>
<feature type="binding site" evidence="1">
    <location>
        <begin position="259"/>
        <end position="264"/>
    </location>
    <ligand>
        <name>NAD(+)</name>
        <dbReference type="ChEBI" id="CHEBI:57540"/>
    </ligand>
</feature>
<feature type="binding site" evidence="1">
    <location>
        <position position="282"/>
    </location>
    <ligand>
        <name>NAD(+)</name>
        <dbReference type="ChEBI" id="CHEBI:57540"/>
    </ligand>
</feature>
<feature type="binding site" evidence="1">
    <location>
        <position position="317"/>
    </location>
    <ligand>
        <name>NAD(+)</name>
        <dbReference type="ChEBI" id="CHEBI:57540"/>
    </ligand>
</feature>
<feature type="binding site" evidence="1">
    <location>
        <begin position="338"/>
        <end position="340"/>
    </location>
    <ligand>
        <name>NAD(+)</name>
        <dbReference type="ChEBI" id="CHEBI:57540"/>
    </ligand>
</feature>
<feature type="binding site" evidence="1">
    <location>
        <position position="383"/>
    </location>
    <ligand>
        <name>NAD(+)</name>
        <dbReference type="ChEBI" id="CHEBI:57540"/>
    </ligand>
</feature>
<reference key="1">
    <citation type="submission" date="2008-05" db="EMBL/GenBank/DDBJ databases">
        <title>Complete sequence of Rhodopseudomonas palustris TIE-1.</title>
        <authorList>
            <consortium name="US DOE Joint Genome Institute"/>
            <person name="Lucas S."/>
            <person name="Copeland A."/>
            <person name="Lapidus A."/>
            <person name="Glavina del Rio T."/>
            <person name="Dalin E."/>
            <person name="Tice H."/>
            <person name="Pitluck S."/>
            <person name="Chain P."/>
            <person name="Malfatti S."/>
            <person name="Shin M."/>
            <person name="Vergez L."/>
            <person name="Lang D."/>
            <person name="Schmutz J."/>
            <person name="Larimer F."/>
            <person name="Land M."/>
            <person name="Hauser L."/>
            <person name="Kyrpides N."/>
            <person name="Mikhailova N."/>
            <person name="Emerson D."/>
            <person name="Newman D.K."/>
            <person name="Roden E."/>
            <person name="Richardson P."/>
        </authorList>
    </citation>
    <scope>NUCLEOTIDE SEQUENCE [LARGE SCALE GENOMIC DNA]</scope>
    <source>
        <strain>TIE-1</strain>
    </source>
</reference>